<accession>Q884D4</accession>
<keyword id="KW-0067">ATP-binding</keyword>
<keyword id="KW-0997">Cell inner membrane</keyword>
<keyword id="KW-1003">Cell membrane</keyword>
<keyword id="KW-0472">Membrane</keyword>
<keyword id="KW-0547">Nucleotide-binding</keyword>
<keyword id="KW-1185">Reference proteome</keyword>
<keyword id="KW-1278">Translocase</keyword>
<keyword id="KW-0812">Transmembrane</keyword>
<keyword id="KW-1133">Transmembrane helix</keyword>
<keyword id="KW-0813">Transport</keyword>
<gene>
    <name evidence="1" type="primary">pvdT</name>
    <name type="ordered locus">PSPTO_2159</name>
</gene>
<comment type="function">
    <text evidence="1 2">Part of the tripartite efflux system PvdRT-OpmQ required for the secretion into the extracellular milieu of the siderophore pyoverdine (PVD), which is involved in iron acquisition (By similarity). This subunit binds PVD and drives its secretion by hydrolyzing ATP (By similarity). The system is responsible for export of newly synthesized PVD after the final steps of biosynthesis have taken place in the periplasm (By similarity). It is also responsible for recycling of PVD after internalization of ferri-PVD into the periplasm by the outer-membrane receptor FpvA and release of iron from PVD, thus making PVD available for new cycles of iron uptake (By similarity).</text>
</comment>
<comment type="subunit">
    <text evidence="2">Part of the tripartite efflux system PvdRT-OpmQ, which is composed of an inner membrane component with both ATPase and permease domains, PvdT, a periplasmic membrane fusion protein, PvdR, and an outer membrane component, OpmQ.</text>
</comment>
<comment type="subcellular location">
    <subcellularLocation>
        <location evidence="1">Cell inner membrane</location>
        <topology evidence="3">Multi-pass membrane protein</topology>
    </subcellularLocation>
</comment>
<comment type="similarity">
    <text evidence="5">Belongs to the ABC transporter superfamily. Macrolide exporter (TC 3.A.1.122) family.</text>
</comment>
<proteinExistence type="inferred from homology"/>
<protein>
    <recommendedName>
        <fullName evidence="1">Pyoverdine export ATP-binding/permease protein PvdT</fullName>
        <ecNumber evidence="1">7.6.2.-</ecNumber>
    </recommendedName>
</protein>
<evidence type="ECO:0000250" key="1">
    <source>
        <dbReference type="UniProtKB" id="Q88F88"/>
    </source>
</evidence>
<evidence type="ECO:0000250" key="2">
    <source>
        <dbReference type="UniProtKB" id="Q9I191"/>
    </source>
</evidence>
<evidence type="ECO:0000255" key="3"/>
<evidence type="ECO:0000255" key="4">
    <source>
        <dbReference type="PROSITE-ProRule" id="PRU00434"/>
    </source>
</evidence>
<evidence type="ECO:0000305" key="5"/>
<organism>
    <name type="scientific">Pseudomonas syringae pv. tomato (strain ATCC BAA-871 / DC3000)</name>
    <dbReference type="NCBI Taxonomy" id="223283"/>
    <lineage>
        <taxon>Bacteria</taxon>
        <taxon>Pseudomonadati</taxon>
        <taxon>Pseudomonadota</taxon>
        <taxon>Gammaproteobacteria</taxon>
        <taxon>Pseudomonadales</taxon>
        <taxon>Pseudomonadaceae</taxon>
        <taxon>Pseudomonas</taxon>
    </lineage>
</organism>
<name>PVDT_PSESM</name>
<sequence length="656" mass="69582">MHTPLIDLRGIRKSYGGGDSPRVNVLRGIDLSIHAGEFVAIVGASGSGKSTLMNILGCLDRPTSGEYLFAGENVAELGGDELAWLRREAFGFVFQGYHLIPSGSAQENVEMPAIYAGTPAAERHARAAALLDRLGLASRTGNRPHQLSGGQQQRVSIARALMNGGHIILADEPTGALDSHSGAEVMTLLDELASQGHVVILITHDREVAARANRVIEISDGLVISDTARDLSTPRSANPAALQAVDLRKRLSEGSGSHGAWKGELLDAIQAAWRVMWVNRFRTALTLLGIVIGVASVVVMLAVGEGSKRQVMAQMSSFGSNIIYLNGKAPNPRAPKGVITLEEVAALGELPEVKMIMPVNGGQAGVRFGNVDHSSYVGGNDTHFPAIFNWPVAEGSYFSEADEQGAAAVAVIGYKVRQKLFGDRIDPIGQYILIENVPFQVVGVLQEKGATSGDLDSDNRIAIPYSSASIRLFGSQDPEYITIATRDANNVKQAEAAIRTLLQRLHNGKQDYELTNNAAMIQAEARTQNTLSLMLGSIAAISLLVGGIGVMNIMLMTVRERTREIGIRMATGARQRDILRQFLTEAVMLSVVGGLAGIVLALAMGAALLASKVAVAFTLSAVIGAFACALVTGVIFGFMPARKAARLDPVAALTSE</sequence>
<dbReference type="EC" id="7.6.2.-" evidence="1"/>
<dbReference type="EMBL" id="AE016853">
    <property type="protein sequence ID" value="AAO55676.1"/>
    <property type="molecule type" value="Genomic_DNA"/>
</dbReference>
<dbReference type="RefSeq" id="NP_791981.1">
    <property type="nucleotide sequence ID" value="NC_004578.1"/>
</dbReference>
<dbReference type="RefSeq" id="WP_005769685.1">
    <property type="nucleotide sequence ID" value="NC_004578.1"/>
</dbReference>
<dbReference type="SMR" id="Q884D4"/>
<dbReference type="STRING" id="223283.PSPTO_2159"/>
<dbReference type="GeneID" id="1183806"/>
<dbReference type="KEGG" id="pst:PSPTO_2159"/>
<dbReference type="PATRIC" id="fig|223283.9.peg.2190"/>
<dbReference type="eggNOG" id="COG0577">
    <property type="taxonomic scope" value="Bacteria"/>
</dbReference>
<dbReference type="eggNOG" id="COG1136">
    <property type="taxonomic scope" value="Bacteria"/>
</dbReference>
<dbReference type="HOGENOM" id="CLU_000604_78_2_6"/>
<dbReference type="OrthoDB" id="9770036at2"/>
<dbReference type="PhylomeDB" id="Q884D4"/>
<dbReference type="Proteomes" id="UP000002515">
    <property type="component" value="Chromosome"/>
</dbReference>
<dbReference type="GO" id="GO:0005886">
    <property type="term" value="C:plasma membrane"/>
    <property type="evidence" value="ECO:0007669"/>
    <property type="project" value="UniProtKB-SubCell"/>
</dbReference>
<dbReference type="GO" id="GO:0008559">
    <property type="term" value="F:ABC-type xenobiotic transporter activity"/>
    <property type="evidence" value="ECO:0000250"/>
    <property type="project" value="GO_Central"/>
</dbReference>
<dbReference type="GO" id="GO:0005524">
    <property type="term" value="F:ATP binding"/>
    <property type="evidence" value="ECO:0007669"/>
    <property type="project" value="UniProtKB-KW"/>
</dbReference>
<dbReference type="GO" id="GO:0016887">
    <property type="term" value="F:ATP hydrolysis activity"/>
    <property type="evidence" value="ECO:0007669"/>
    <property type="project" value="InterPro"/>
</dbReference>
<dbReference type="GO" id="GO:0042908">
    <property type="term" value="P:xenobiotic transport"/>
    <property type="evidence" value="ECO:0000250"/>
    <property type="project" value="GO_Central"/>
</dbReference>
<dbReference type="CDD" id="cd03255">
    <property type="entry name" value="ABC_MJ0796_LolCDE_FtsE"/>
    <property type="match status" value="1"/>
</dbReference>
<dbReference type="FunFam" id="3.40.50.300:FF:000032">
    <property type="entry name" value="Export ABC transporter ATP-binding protein"/>
    <property type="match status" value="1"/>
</dbReference>
<dbReference type="Gene3D" id="3.40.50.300">
    <property type="entry name" value="P-loop containing nucleotide triphosphate hydrolases"/>
    <property type="match status" value="1"/>
</dbReference>
<dbReference type="InterPro" id="IPR003593">
    <property type="entry name" value="AAA+_ATPase"/>
</dbReference>
<dbReference type="InterPro" id="IPR003838">
    <property type="entry name" value="ABC3_permease_C"/>
</dbReference>
<dbReference type="InterPro" id="IPR003439">
    <property type="entry name" value="ABC_transporter-like_ATP-bd"/>
</dbReference>
<dbReference type="InterPro" id="IPR017871">
    <property type="entry name" value="ABC_transporter-like_CS"/>
</dbReference>
<dbReference type="InterPro" id="IPR017911">
    <property type="entry name" value="MacB-like_ATP-bd"/>
</dbReference>
<dbReference type="InterPro" id="IPR025857">
    <property type="entry name" value="MacB_PCD"/>
</dbReference>
<dbReference type="InterPro" id="IPR050250">
    <property type="entry name" value="Macrolide_Exporter_MacB"/>
</dbReference>
<dbReference type="InterPro" id="IPR027417">
    <property type="entry name" value="P-loop_NTPase"/>
</dbReference>
<dbReference type="PANTHER" id="PTHR30572:SF14">
    <property type="entry name" value="MACROLIDE EXPORT ATP-BINDING_PERMEASE PROTEIN MACB"/>
    <property type="match status" value="1"/>
</dbReference>
<dbReference type="PANTHER" id="PTHR30572">
    <property type="entry name" value="MEMBRANE COMPONENT OF TRANSPORTER-RELATED"/>
    <property type="match status" value="1"/>
</dbReference>
<dbReference type="Pfam" id="PF00005">
    <property type="entry name" value="ABC_tran"/>
    <property type="match status" value="1"/>
</dbReference>
<dbReference type="Pfam" id="PF02687">
    <property type="entry name" value="FtsX"/>
    <property type="match status" value="1"/>
</dbReference>
<dbReference type="Pfam" id="PF12704">
    <property type="entry name" value="MacB_PCD"/>
    <property type="match status" value="1"/>
</dbReference>
<dbReference type="SMART" id="SM00382">
    <property type="entry name" value="AAA"/>
    <property type="match status" value="1"/>
</dbReference>
<dbReference type="SUPFAM" id="SSF52540">
    <property type="entry name" value="P-loop containing nucleoside triphosphate hydrolases"/>
    <property type="match status" value="1"/>
</dbReference>
<dbReference type="PROSITE" id="PS00211">
    <property type="entry name" value="ABC_TRANSPORTER_1"/>
    <property type="match status" value="1"/>
</dbReference>
<dbReference type="PROSITE" id="PS50893">
    <property type="entry name" value="ABC_TRANSPORTER_2"/>
    <property type="match status" value="1"/>
</dbReference>
<dbReference type="PROSITE" id="PS51267">
    <property type="entry name" value="MACB"/>
    <property type="match status" value="1"/>
</dbReference>
<feature type="chain" id="PRO_0000269965" description="Pyoverdine export ATP-binding/permease protein PvdT">
    <location>
        <begin position="1"/>
        <end position="656"/>
    </location>
</feature>
<feature type="transmembrane region" description="Helical" evidence="3">
    <location>
        <begin position="284"/>
        <end position="304"/>
    </location>
</feature>
<feature type="transmembrane region" description="Helical" evidence="3">
    <location>
        <begin position="538"/>
        <end position="558"/>
    </location>
</feature>
<feature type="transmembrane region" description="Helical" evidence="3">
    <location>
        <begin position="589"/>
        <end position="609"/>
    </location>
</feature>
<feature type="transmembrane region" description="Helical" evidence="3">
    <location>
        <begin position="619"/>
        <end position="639"/>
    </location>
</feature>
<feature type="domain" description="ABC transporter" evidence="4">
    <location>
        <begin position="6"/>
        <end position="245"/>
    </location>
</feature>
<feature type="binding site" evidence="4">
    <location>
        <begin position="43"/>
        <end position="50"/>
    </location>
    <ligand>
        <name>ATP</name>
        <dbReference type="ChEBI" id="CHEBI:30616"/>
    </ligand>
</feature>
<reference key="1">
    <citation type="journal article" date="2003" name="Proc. Natl. Acad. Sci. U.S.A.">
        <title>The complete genome sequence of the Arabidopsis and tomato pathogen Pseudomonas syringae pv. tomato DC3000.</title>
        <authorList>
            <person name="Buell C.R."/>
            <person name="Joardar V."/>
            <person name="Lindeberg M."/>
            <person name="Selengut J."/>
            <person name="Paulsen I.T."/>
            <person name="Gwinn M.L."/>
            <person name="Dodson R.J."/>
            <person name="DeBoy R.T."/>
            <person name="Durkin A.S."/>
            <person name="Kolonay J.F."/>
            <person name="Madupu R."/>
            <person name="Daugherty S.C."/>
            <person name="Brinkac L.M."/>
            <person name="Beanan M.J."/>
            <person name="Haft D.H."/>
            <person name="Nelson W.C."/>
            <person name="Davidsen T.M."/>
            <person name="Zafar N."/>
            <person name="Zhou L."/>
            <person name="Liu J."/>
            <person name="Yuan Q."/>
            <person name="Khouri H.M."/>
            <person name="Fedorova N.B."/>
            <person name="Tran B."/>
            <person name="Russell D."/>
            <person name="Berry K.J."/>
            <person name="Utterback T.R."/>
            <person name="Van Aken S.E."/>
            <person name="Feldblyum T.V."/>
            <person name="D'Ascenzo M."/>
            <person name="Deng W.-L."/>
            <person name="Ramos A.R."/>
            <person name="Alfano J.R."/>
            <person name="Cartinhour S."/>
            <person name="Chatterjee A.K."/>
            <person name="Delaney T.P."/>
            <person name="Lazarowitz S.G."/>
            <person name="Martin G.B."/>
            <person name="Schneider D.J."/>
            <person name="Tang X."/>
            <person name="Bender C.L."/>
            <person name="White O."/>
            <person name="Fraser C.M."/>
            <person name="Collmer A."/>
        </authorList>
    </citation>
    <scope>NUCLEOTIDE SEQUENCE [LARGE SCALE GENOMIC DNA]</scope>
    <source>
        <strain>ATCC BAA-871 / DC3000</strain>
    </source>
</reference>